<gene>
    <name evidence="1" type="primary">rplT</name>
    <name type="ordered locus">HY04AAS1_1044</name>
</gene>
<keyword id="KW-0687">Ribonucleoprotein</keyword>
<keyword id="KW-0689">Ribosomal protein</keyword>
<keyword id="KW-0694">RNA-binding</keyword>
<keyword id="KW-0699">rRNA-binding</keyword>
<reference key="1">
    <citation type="journal article" date="2009" name="J. Bacteriol.">
        <title>Complete and draft genome sequences of six members of the Aquificales.</title>
        <authorList>
            <person name="Reysenbach A.-L."/>
            <person name="Hamamura N."/>
            <person name="Podar M."/>
            <person name="Griffiths E."/>
            <person name="Ferreira S."/>
            <person name="Hochstein R."/>
            <person name="Heidelberg J."/>
            <person name="Johnson J."/>
            <person name="Mead D."/>
            <person name="Pohorille A."/>
            <person name="Sarmiento M."/>
            <person name="Schweighofer K."/>
            <person name="Seshadri R."/>
            <person name="Voytek M.A."/>
        </authorList>
    </citation>
    <scope>NUCLEOTIDE SEQUENCE [LARGE SCALE GENOMIC DNA]</scope>
    <source>
        <strain>Y04AAS1</strain>
    </source>
</reference>
<evidence type="ECO:0000255" key="1">
    <source>
        <dbReference type="HAMAP-Rule" id="MF_00382"/>
    </source>
</evidence>
<evidence type="ECO:0000305" key="2"/>
<feature type="chain" id="PRO_1000205717" description="Large ribosomal subunit protein bL20">
    <location>
        <begin position="1"/>
        <end position="116"/>
    </location>
</feature>
<organism>
    <name type="scientific">Hydrogenobaculum sp. (strain Y04AAS1)</name>
    <dbReference type="NCBI Taxonomy" id="380749"/>
    <lineage>
        <taxon>Bacteria</taxon>
        <taxon>Pseudomonadati</taxon>
        <taxon>Aquificota</taxon>
        <taxon>Aquificia</taxon>
        <taxon>Aquificales</taxon>
        <taxon>Aquificaceae</taxon>
        <taxon>Hydrogenobaculum</taxon>
    </lineage>
</organism>
<dbReference type="EMBL" id="CP001130">
    <property type="protein sequence ID" value="ACG57730.1"/>
    <property type="molecule type" value="Genomic_DNA"/>
</dbReference>
<dbReference type="RefSeq" id="WP_012514086.1">
    <property type="nucleotide sequence ID" value="NC_011126.1"/>
</dbReference>
<dbReference type="SMR" id="B4U9B9"/>
<dbReference type="STRING" id="380749.HY04AAS1_1044"/>
<dbReference type="KEGG" id="hya:HY04AAS1_1044"/>
<dbReference type="eggNOG" id="COG0292">
    <property type="taxonomic scope" value="Bacteria"/>
</dbReference>
<dbReference type="HOGENOM" id="CLU_123265_0_1_0"/>
<dbReference type="OrthoDB" id="9808966at2"/>
<dbReference type="GO" id="GO:1990904">
    <property type="term" value="C:ribonucleoprotein complex"/>
    <property type="evidence" value="ECO:0007669"/>
    <property type="project" value="UniProtKB-KW"/>
</dbReference>
<dbReference type="GO" id="GO:0005840">
    <property type="term" value="C:ribosome"/>
    <property type="evidence" value="ECO:0007669"/>
    <property type="project" value="UniProtKB-KW"/>
</dbReference>
<dbReference type="GO" id="GO:0019843">
    <property type="term" value="F:rRNA binding"/>
    <property type="evidence" value="ECO:0007669"/>
    <property type="project" value="UniProtKB-UniRule"/>
</dbReference>
<dbReference type="GO" id="GO:0003735">
    <property type="term" value="F:structural constituent of ribosome"/>
    <property type="evidence" value="ECO:0007669"/>
    <property type="project" value="InterPro"/>
</dbReference>
<dbReference type="GO" id="GO:0000027">
    <property type="term" value="P:ribosomal large subunit assembly"/>
    <property type="evidence" value="ECO:0007669"/>
    <property type="project" value="UniProtKB-UniRule"/>
</dbReference>
<dbReference type="GO" id="GO:0006412">
    <property type="term" value="P:translation"/>
    <property type="evidence" value="ECO:0007669"/>
    <property type="project" value="InterPro"/>
</dbReference>
<dbReference type="CDD" id="cd07026">
    <property type="entry name" value="Ribosomal_L20"/>
    <property type="match status" value="1"/>
</dbReference>
<dbReference type="FunFam" id="1.10.1900.20:FF:000001">
    <property type="entry name" value="50S ribosomal protein L20"/>
    <property type="match status" value="1"/>
</dbReference>
<dbReference type="Gene3D" id="6.10.160.10">
    <property type="match status" value="1"/>
</dbReference>
<dbReference type="Gene3D" id="1.10.1900.20">
    <property type="entry name" value="Ribosomal protein L20"/>
    <property type="match status" value="1"/>
</dbReference>
<dbReference type="HAMAP" id="MF_00382">
    <property type="entry name" value="Ribosomal_bL20"/>
    <property type="match status" value="1"/>
</dbReference>
<dbReference type="InterPro" id="IPR005813">
    <property type="entry name" value="Ribosomal_bL20"/>
</dbReference>
<dbReference type="InterPro" id="IPR049946">
    <property type="entry name" value="RIBOSOMAL_L20_CS"/>
</dbReference>
<dbReference type="InterPro" id="IPR035566">
    <property type="entry name" value="Ribosomal_protein_bL20_C"/>
</dbReference>
<dbReference type="NCBIfam" id="TIGR01032">
    <property type="entry name" value="rplT_bact"/>
    <property type="match status" value="1"/>
</dbReference>
<dbReference type="PANTHER" id="PTHR10986">
    <property type="entry name" value="39S RIBOSOMAL PROTEIN L20"/>
    <property type="match status" value="1"/>
</dbReference>
<dbReference type="Pfam" id="PF00453">
    <property type="entry name" value="Ribosomal_L20"/>
    <property type="match status" value="1"/>
</dbReference>
<dbReference type="PRINTS" id="PR00062">
    <property type="entry name" value="RIBOSOMALL20"/>
</dbReference>
<dbReference type="SUPFAM" id="SSF74731">
    <property type="entry name" value="Ribosomal protein L20"/>
    <property type="match status" value="1"/>
</dbReference>
<dbReference type="PROSITE" id="PS00937">
    <property type="entry name" value="RIBOSOMAL_L20"/>
    <property type="match status" value="1"/>
</dbReference>
<accession>B4U9B9</accession>
<protein>
    <recommendedName>
        <fullName evidence="1">Large ribosomal subunit protein bL20</fullName>
    </recommendedName>
    <alternativeName>
        <fullName evidence="2">50S ribosomal protein L20</fullName>
    </alternativeName>
</protein>
<comment type="function">
    <text evidence="1">Binds directly to 23S ribosomal RNA and is necessary for the in vitro assembly process of the 50S ribosomal subunit. It is not involved in the protein synthesizing functions of that subunit.</text>
</comment>
<comment type="similarity">
    <text evidence="1">Belongs to the bacterial ribosomal protein bL20 family.</text>
</comment>
<proteinExistence type="inferred from homology"/>
<name>RL20_HYDS0</name>
<sequence>MRVKGRSSKKFRKKVLKLAKGYRGQKSRVYRKAKEAVIRALKYQYRDRRQRKRQFRALWIARINAACRANGMTYSKFINGLKKAGINLNRKSLSQIAILDPQAFKELIEKARQHVA</sequence>